<proteinExistence type="inferred from homology"/>
<feature type="chain" id="PRO_0000175077" description="Thymidine kinase">
    <location>
        <begin position="1"/>
        <end position="527"/>
    </location>
</feature>
<feature type="region of interest" description="Disordered" evidence="2">
    <location>
        <begin position="1"/>
        <end position="57"/>
    </location>
</feature>
<feature type="compositionally biased region" description="Basic and acidic residues" evidence="2">
    <location>
        <begin position="9"/>
        <end position="18"/>
    </location>
</feature>
<feature type="compositionally biased region" description="Polar residues" evidence="2">
    <location>
        <begin position="32"/>
        <end position="41"/>
    </location>
</feature>
<feature type="active site" description="Proton acceptor" evidence="1">
    <location>
        <position position="243"/>
    </location>
</feature>
<feature type="binding site" evidence="1">
    <location>
        <begin position="216"/>
        <end position="223"/>
    </location>
    <ligand>
        <name>ATP</name>
        <dbReference type="ChEBI" id="CHEBI:30616"/>
    </ligand>
</feature>
<feature type="binding site" evidence="1">
    <location>
        <position position="260"/>
    </location>
    <ligand>
        <name>substrate</name>
    </ligand>
</feature>
<feature type="binding site" evidence="1">
    <location>
        <position position="281"/>
    </location>
    <ligand>
        <name>substrate</name>
    </ligand>
</feature>
<feature type="binding site" evidence="1">
    <location>
        <position position="368"/>
    </location>
    <ligand>
        <name>ATP</name>
        <dbReference type="ChEBI" id="CHEBI:30616"/>
    </ligand>
</feature>
<feature type="binding site" evidence="1">
    <location>
        <position position="374"/>
    </location>
    <ligand>
        <name>substrate</name>
    </ligand>
</feature>
<dbReference type="EC" id="2.7.1.21" evidence="1"/>
<dbReference type="EMBL" id="X64346">
    <property type="protein sequence ID" value="CAA45643.1"/>
    <property type="molecule type" value="Genomic_DNA"/>
</dbReference>
<dbReference type="EMBL" id="D00543">
    <property type="protein sequence ID" value="BAA00432.1"/>
    <property type="molecule type" value="Genomic_DNA"/>
</dbReference>
<dbReference type="RefSeq" id="NP_040223.1">
    <property type="nucleotide sequence ID" value="NC_001350.1"/>
</dbReference>
<dbReference type="SMR" id="P21293"/>
<dbReference type="GeneID" id="1488261"/>
<dbReference type="KEGG" id="vg:1488261"/>
<dbReference type="Proteomes" id="UP000000587">
    <property type="component" value="Segment"/>
</dbReference>
<dbReference type="GO" id="GO:0005524">
    <property type="term" value="F:ATP binding"/>
    <property type="evidence" value="ECO:0007669"/>
    <property type="project" value="UniProtKB-KW"/>
</dbReference>
<dbReference type="GO" id="GO:0004797">
    <property type="term" value="F:thymidine kinase activity"/>
    <property type="evidence" value="ECO:0007669"/>
    <property type="project" value="UniProtKB-EC"/>
</dbReference>
<dbReference type="GO" id="GO:0071897">
    <property type="term" value="P:DNA biosynthetic process"/>
    <property type="evidence" value="ECO:0007669"/>
    <property type="project" value="UniProtKB-KW"/>
</dbReference>
<dbReference type="GO" id="GO:0006230">
    <property type="term" value="P:TMP biosynthetic process"/>
    <property type="evidence" value="ECO:0007669"/>
    <property type="project" value="InterPro"/>
</dbReference>
<dbReference type="Gene3D" id="3.40.50.300">
    <property type="entry name" value="P-loop containing nucleotide triphosphate hydrolases"/>
    <property type="match status" value="1"/>
</dbReference>
<dbReference type="HAMAP" id="MF_04029">
    <property type="entry name" value="HSV_KITH"/>
    <property type="match status" value="1"/>
</dbReference>
<dbReference type="InterPro" id="IPR050566">
    <property type="entry name" value="Deoxyribonucleoside_kinase"/>
</dbReference>
<dbReference type="InterPro" id="IPR001889">
    <property type="entry name" value="Herpes_TK"/>
</dbReference>
<dbReference type="InterPro" id="IPR013672">
    <property type="entry name" value="Herpes_TK_C"/>
</dbReference>
<dbReference type="InterPro" id="IPR027417">
    <property type="entry name" value="P-loop_NTPase"/>
</dbReference>
<dbReference type="PANTHER" id="PTHR10513:SF35">
    <property type="entry name" value="DEOXYADENOSINE KINASE"/>
    <property type="match status" value="1"/>
</dbReference>
<dbReference type="PANTHER" id="PTHR10513">
    <property type="entry name" value="DEOXYNUCLEOSIDE KINASE"/>
    <property type="match status" value="1"/>
</dbReference>
<dbReference type="Pfam" id="PF00693">
    <property type="entry name" value="Herpes_TK"/>
    <property type="match status" value="1"/>
</dbReference>
<dbReference type="Pfam" id="PF08465">
    <property type="entry name" value="Herpes_TK_C"/>
    <property type="match status" value="1"/>
</dbReference>
<dbReference type="SUPFAM" id="SSF52540">
    <property type="entry name" value="P-loop containing nucleoside triphosphate hydrolases"/>
    <property type="match status" value="1"/>
</dbReference>
<sequence length="527" mass="59807">MTGRGQPPKKNDTYDYPRKQPPKNGSYDNYDYPTSTKTRSTNKQRKDSNYPPRETIFEPDLAADPIYSVPRPPSRVPHKLVKVNYKSNLVPITASNSVSELLSLHDETQVTECVEAPLIAKSPDITVYEKMFSVRPKHTLTKLEGKQKMFTRKKKGSFVKIGSNMLEFGESLKSKLHNDSKKSPDEPDGLVHVPVHLLYPPKHQDPVPAFFIFLEGSIGVGKTTLLKSMNGILGGKNVLAFHEPIAYWTDVFSNSLEEVYKLTLPAKVGRTSNSAKLLACQLKFASPLLALKTATDRLSSPKNSLLSSDMWVMFDRHPLSATVVFPYMHFQNGFLSFSHLIQLWSSFKASRGDNIILLNLNSQENLKRVKKRNRKEEKSVSIEHIRLLNNCYHAVYCAWLLVQNFTPEEIVEVCFNAKHITDLSSSKPSFLAKHVSTEDMLKSSIFNTWIEMTKAHRDSCTLMECLLTFCKELEKVQLIHVNVSPFTDDIPGLWASIYTSIRRNSAIKPNRVNWLALEDLARTFNSQ</sequence>
<comment type="function">
    <text evidence="1">Catalyzes the transfer of the gamma-phospho group of ATP to thymidine to generate dTMP in the salvage pathway of pyrimidine synthesis. The dTMP serves as a substrate for DNA polymerase during viral DNA replication. Allows the virus to be reactivated and to grow in non-proliferative cells lacking a high concentration of phosphorylated nucleic acid precursors.</text>
</comment>
<comment type="catalytic activity">
    <reaction evidence="1">
        <text>thymidine + ATP = dTMP + ADP + H(+)</text>
        <dbReference type="Rhea" id="RHEA:19129"/>
        <dbReference type="ChEBI" id="CHEBI:15378"/>
        <dbReference type="ChEBI" id="CHEBI:17748"/>
        <dbReference type="ChEBI" id="CHEBI:30616"/>
        <dbReference type="ChEBI" id="CHEBI:63528"/>
        <dbReference type="ChEBI" id="CHEBI:456216"/>
        <dbReference type="EC" id="2.7.1.21"/>
    </reaction>
</comment>
<comment type="subunit">
    <text evidence="1">Homodimer.</text>
</comment>
<comment type="similarity">
    <text evidence="1">Belongs to the herpesviridae thymidine kinase family.</text>
</comment>
<name>KITH_SHV21</name>
<gene>
    <name evidence="1" type="primary">TK</name>
    <name type="ordered locus">21</name>
</gene>
<reference key="1">
    <citation type="journal article" date="1989" name="J. Gen. Virol.">
        <title>A comparative analysis of the sequence of the thymidine kinase gene of a gammaherpesvirus, herpesvirus saimiri.</title>
        <authorList>
            <person name="Honess R.W."/>
            <person name="Craxton M.A."/>
            <person name="Williams L."/>
            <person name="Gompels U.A."/>
        </authorList>
    </citation>
    <scope>NUCLEOTIDE SEQUENCE [GENOMIC DNA]</scope>
</reference>
<reference key="2">
    <citation type="journal article" date="1992" name="J. Virol.">
        <title>Primary structure of the herpesvirus saimiri genome.</title>
        <authorList>
            <person name="Albrecht J.-C."/>
            <person name="Nicholas J."/>
            <person name="Biller D."/>
            <person name="Cameron K.R."/>
            <person name="Biesinger B."/>
            <person name="Newman C."/>
            <person name="Wittmann S."/>
            <person name="Craxton M.A."/>
            <person name="Coleman H."/>
            <person name="Fleckenstein B."/>
            <person name="Honess R.W."/>
        </authorList>
    </citation>
    <scope>NUCLEOTIDE SEQUENCE [LARGE SCALE GENOMIC DNA]</scope>
</reference>
<evidence type="ECO:0000255" key="1">
    <source>
        <dbReference type="HAMAP-Rule" id="MF_04029"/>
    </source>
</evidence>
<evidence type="ECO:0000256" key="2">
    <source>
        <dbReference type="SAM" id="MobiDB-lite"/>
    </source>
</evidence>
<accession>P21293</accession>
<organism>
    <name type="scientific">Saimiriine herpesvirus 2 (strain 11)</name>
    <name type="common">SaHV-2</name>
    <name type="synonym">Herpesvirus saimiri</name>
    <dbReference type="NCBI Taxonomy" id="10383"/>
    <lineage>
        <taxon>Viruses</taxon>
        <taxon>Duplodnaviria</taxon>
        <taxon>Heunggongvirae</taxon>
        <taxon>Peploviricota</taxon>
        <taxon>Herviviricetes</taxon>
        <taxon>Herpesvirales</taxon>
        <taxon>Orthoherpesviridae</taxon>
        <taxon>Gammaherpesvirinae</taxon>
        <taxon>Rhadinovirus</taxon>
        <taxon>Rhadinovirus saimiriinegamma2</taxon>
        <taxon>Saimiriine herpesvirus 2</taxon>
    </lineage>
</organism>
<keyword id="KW-0067">ATP-binding</keyword>
<keyword id="KW-0237">DNA synthesis</keyword>
<keyword id="KW-0244">Early protein</keyword>
<keyword id="KW-0418">Kinase</keyword>
<keyword id="KW-0547">Nucleotide-binding</keyword>
<keyword id="KW-1185">Reference proteome</keyword>
<keyword id="KW-0808">Transferase</keyword>
<protein>
    <recommendedName>
        <fullName evidence="1">Thymidine kinase</fullName>
        <ecNumber evidence="1">2.7.1.21</ecNumber>
    </recommendedName>
</protein>
<organismHost>
    <name type="scientific">Saimiri sciureus</name>
    <name type="common">Common squirrel monkey</name>
    <dbReference type="NCBI Taxonomy" id="9521"/>
</organismHost>